<accession>B8D8C7</accession>
<organism>
    <name type="scientific">Buchnera aphidicola subsp. Acyrthosiphon pisum (strain 5A)</name>
    <dbReference type="NCBI Taxonomy" id="563178"/>
    <lineage>
        <taxon>Bacteria</taxon>
        <taxon>Pseudomonadati</taxon>
        <taxon>Pseudomonadota</taxon>
        <taxon>Gammaproteobacteria</taxon>
        <taxon>Enterobacterales</taxon>
        <taxon>Erwiniaceae</taxon>
        <taxon>Buchnera</taxon>
    </lineage>
</organism>
<comment type="function">
    <text evidence="1">Binds as a heterodimer with protein bS6 to the central domain of the 16S rRNA, where it helps stabilize the platform of the 30S subunit.</text>
</comment>
<comment type="subunit">
    <text evidence="1">Part of the 30S ribosomal subunit. Forms a tight heterodimer with protein bS6.</text>
</comment>
<comment type="similarity">
    <text evidence="1">Belongs to the bacterial ribosomal protein bS18 family.</text>
</comment>
<reference key="1">
    <citation type="journal article" date="2009" name="Science">
        <title>The dynamics and time scale of ongoing genomic erosion in symbiotic bacteria.</title>
        <authorList>
            <person name="Moran N.A."/>
            <person name="McLaughlin H.J."/>
            <person name="Sorek R."/>
        </authorList>
    </citation>
    <scope>NUCLEOTIDE SEQUENCE [LARGE SCALE GENOMIC DNA]</scope>
    <source>
        <strain>5A</strain>
    </source>
</reference>
<sequence length="75" mass="8984">MARYFRRRKFCRFTAEGVQEIDYKDIAVLKNYITESGKIVPSRITGTRAKYQRQLSRAIKRARYLALLPYTDQHR</sequence>
<proteinExistence type="inferred from homology"/>
<keyword id="KW-0687">Ribonucleoprotein</keyword>
<keyword id="KW-0689">Ribosomal protein</keyword>
<keyword id="KW-0694">RNA-binding</keyword>
<keyword id="KW-0699">rRNA-binding</keyword>
<name>RS18_BUCA5</name>
<dbReference type="EMBL" id="CP001161">
    <property type="protein sequence ID" value="ACL30903.1"/>
    <property type="molecule type" value="Genomic_DNA"/>
</dbReference>
<dbReference type="RefSeq" id="WP_009874511.1">
    <property type="nucleotide sequence ID" value="NC_011833.1"/>
</dbReference>
<dbReference type="SMR" id="B8D8C7"/>
<dbReference type="KEGG" id="bap:BUAP5A_556"/>
<dbReference type="HOGENOM" id="CLU_148710_2_3_6"/>
<dbReference type="OrthoDB" id="9812008at2"/>
<dbReference type="Proteomes" id="UP000006904">
    <property type="component" value="Chromosome"/>
</dbReference>
<dbReference type="GO" id="GO:0022627">
    <property type="term" value="C:cytosolic small ribosomal subunit"/>
    <property type="evidence" value="ECO:0007669"/>
    <property type="project" value="TreeGrafter"/>
</dbReference>
<dbReference type="GO" id="GO:0070181">
    <property type="term" value="F:small ribosomal subunit rRNA binding"/>
    <property type="evidence" value="ECO:0007669"/>
    <property type="project" value="TreeGrafter"/>
</dbReference>
<dbReference type="GO" id="GO:0003735">
    <property type="term" value="F:structural constituent of ribosome"/>
    <property type="evidence" value="ECO:0007669"/>
    <property type="project" value="InterPro"/>
</dbReference>
<dbReference type="GO" id="GO:0006412">
    <property type="term" value="P:translation"/>
    <property type="evidence" value="ECO:0007669"/>
    <property type="project" value="UniProtKB-UniRule"/>
</dbReference>
<dbReference type="FunFam" id="4.10.640.10:FF:000001">
    <property type="entry name" value="30S ribosomal protein S18"/>
    <property type="match status" value="1"/>
</dbReference>
<dbReference type="Gene3D" id="4.10.640.10">
    <property type="entry name" value="Ribosomal protein S18"/>
    <property type="match status" value="1"/>
</dbReference>
<dbReference type="HAMAP" id="MF_00270">
    <property type="entry name" value="Ribosomal_bS18"/>
    <property type="match status" value="1"/>
</dbReference>
<dbReference type="InterPro" id="IPR001648">
    <property type="entry name" value="Ribosomal_bS18"/>
</dbReference>
<dbReference type="InterPro" id="IPR018275">
    <property type="entry name" value="Ribosomal_bS18_CS"/>
</dbReference>
<dbReference type="InterPro" id="IPR036870">
    <property type="entry name" value="Ribosomal_bS18_sf"/>
</dbReference>
<dbReference type="NCBIfam" id="TIGR00165">
    <property type="entry name" value="S18"/>
    <property type="match status" value="1"/>
</dbReference>
<dbReference type="PANTHER" id="PTHR13479">
    <property type="entry name" value="30S RIBOSOMAL PROTEIN S18"/>
    <property type="match status" value="1"/>
</dbReference>
<dbReference type="PANTHER" id="PTHR13479:SF40">
    <property type="entry name" value="SMALL RIBOSOMAL SUBUNIT PROTEIN BS18M"/>
    <property type="match status" value="1"/>
</dbReference>
<dbReference type="Pfam" id="PF01084">
    <property type="entry name" value="Ribosomal_S18"/>
    <property type="match status" value="1"/>
</dbReference>
<dbReference type="PRINTS" id="PR00974">
    <property type="entry name" value="RIBOSOMALS18"/>
</dbReference>
<dbReference type="SUPFAM" id="SSF46911">
    <property type="entry name" value="Ribosomal protein S18"/>
    <property type="match status" value="1"/>
</dbReference>
<dbReference type="PROSITE" id="PS00057">
    <property type="entry name" value="RIBOSOMAL_S18"/>
    <property type="match status" value="1"/>
</dbReference>
<protein>
    <recommendedName>
        <fullName evidence="1">Small ribosomal subunit protein bS18</fullName>
    </recommendedName>
    <alternativeName>
        <fullName evidence="2">30S ribosomal protein S18</fullName>
    </alternativeName>
</protein>
<feature type="chain" id="PRO_1000125788" description="Small ribosomal subunit protein bS18">
    <location>
        <begin position="1"/>
        <end position="75"/>
    </location>
</feature>
<gene>
    <name evidence="1" type="primary">rpsR</name>
    <name type="ordered locus">BUAP5A_556</name>
</gene>
<evidence type="ECO:0000255" key="1">
    <source>
        <dbReference type="HAMAP-Rule" id="MF_00270"/>
    </source>
</evidence>
<evidence type="ECO:0000305" key="2"/>